<keyword id="KW-0046">Antibiotic resistance</keyword>
<keyword id="KW-0050">Antiport</keyword>
<keyword id="KW-0997">Cell inner membrane</keyword>
<keyword id="KW-1003">Cell membrane</keyword>
<keyword id="KW-0472">Membrane</keyword>
<keyword id="KW-0812">Transmembrane</keyword>
<keyword id="KW-1133">Transmembrane helix</keyword>
<keyword id="KW-0813">Transport</keyword>
<keyword id="KW-0814">Transposable element</keyword>
<evidence type="ECO:0000269" key="1">
    <source>
    </source>
</evidence>
<evidence type="ECO:0000269" key="2">
    <source>
    </source>
</evidence>
<evidence type="ECO:0000305" key="3"/>
<evidence type="ECO:0000305" key="4">
    <source>
    </source>
</evidence>
<comment type="function">
    <text>Resistance to tetracycline by an active tetracycline efflux. This is an energy-dependent process that decreases the accumulation of the antibiotic in whole cells. This protein functions as a metal-tetracycline/H(+) antiporter.</text>
</comment>
<comment type="subcellular location">
    <subcellularLocation>
        <location>Cell inner membrane</location>
        <topology>Multi-pass membrane protein</topology>
    </subcellularLocation>
</comment>
<comment type="similarity">
    <text evidence="3">Belongs to the major facilitator superfamily. TCR/Tet family.</text>
</comment>
<sequence length="401" mass="43267">MNSSTKIALVITLLDAMGIGLIMPVLPTLLREFIASEDIANHFGVLLALYALMQVIFAPWLGKMSDRFGRRPVLLLSLIGASLDYLLLAFSSALWMLYLGRLLSGITGATGAVAASVIADTTSASQRVKWFGWLGASFGLGLIAGPIIGGFAGEISPHSPFFIAALLNIVTFLVVMFWFRETKNTRDNTDTEVGVETQSNSVYITLFKTMPILLIIYFSAQLIGQIPATVWVLFTENRFGWNSMMVGFSLAGLGLLHSVFQAFVAGRIATKWGEKTAVLLGFIADSSAFAFLAFISEGWLVFPVLILLAGGGIALPALQGVMSIQTKSHQQGALQGLLVSLTNATGVIGPLLFAVIYNHSLPIWDGWIWIIGLAFYCIIILLSMTFMLTPQAQGSKQETSA</sequence>
<feature type="chain" id="PRO_0000173393" description="Tetracycline resistance protein, class B">
    <location>
        <begin position="1"/>
        <end position="401"/>
    </location>
</feature>
<feature type="topological domain" description="Cytoplasmic" evidence="4">
    <location>
        <begin position="1"/>
        <end position="6"/>
    </location>
</feature>
<feature type="transmembrane region" description="Helical" evidence="3">
    <location>
        <begin position="7"/>
        <end position="30"/>
    </location>
</feature>
<feature type="topological domain" description="Periplasmic" evidence="4">
    <location>
        <begin position="31"/>
        <end position="42"/>
    </location>
</feature>
<feature type="transmembrane region" description="Helical" evidence="3">
    <location>
        <begin position="43"/>
        <end position="61"/>
    </location>
</feature>
<feature type="topological domain" description="Cytoplasmic" evidence="4">
    <location>
        <begin position="62"/>
        <end position="71"/>
    </location>
</feature>
<feature type="transmembrane region" description="Helical" evidence="3">
    <location>
        <begin position="72"/>
        <end position="91"/>
    </location>
</feature>
<feature type="topological domain" description="Periplasmic" evidence="4">
    <location>
        <begin position="92"/>
        <end position="98"/>
    </location>
</feature>
<feature type="transmembrane region" description="Helical" evidence="3">
    <location>
        <begin position="99"/>
        <end position="119"/>
    </location>
</feature>
<feature type="topological domain" description="Cytoplasmic" evidence="4">
    <location>
        <begin position="120"/>
        <end position="129"/>
    </location>
</feature>
<feature type="transmembrane region" description="Helical" evidence="3">
    <location>
        <begin position="130"/>
        <end position="152"/>
    </location>
</feature>
<feature type="topological domain" description="Periplasmic" evidence="4">
    <location>
        <begin position="153"/>
        <end position="158"/>
    </location>
</feature>
<feature type="transmembrane region" description="Helical" evidence="3">
    <location>
        <begin position="159"/>
        <end position="178"/>
    </location>
</feature>
<feature type="topological domain" description="Cytoplasmic" evidence="4">
    <location>
        <begin position="179"/>
        <end position="211"/>
    </location>
</feature>
<feature type="transmembrane region" description="Helical" evidence="3">
    <location>
        <begin position="212"/>
        <end position="232"/>
    </location>
</feature>
<feature type="topological domain" description="Periplasmic" evidence="4">
    <location>
        <begin position="233"/>
        <end position="243"/>
    </location>
</feature>
<feature type="transmembrane region" description="Helical" evidence="3">
    <location>
        <begin position="244"/>
        <end position="265"/>
    </location>
</feature>
<feature type="topological domain" description="Cytoplasmic" evidence="4">
    <location>
        <begin position="266"/>
        <end position="275"/>
    </location>
</feature>
<feature type="transmembrane region" description="Helical" evidence="3">
    <location>
        <begin position="276"/>
        <end position="295"/>
    </location>
</feature>
<feature type="topological domain" description="Periplasmic" evidence="4">
    <location>
        <begin position="296"/>
        <end position="298"/>
    </location>
</feature>
<feature type="transmembrane region" description="Helical" evidence="3">
    <location>
        <begin position="299"/>
        <end position="322"/>
    </location>
</feature>
<feature type="topological domain" description="Cytoplasmic" evidence="4">
    <location>
        <begin position="323"/>
        <end position="332"/>
    </location>
</feature>
<feature type="transmembrane region" description="Helical" evidence="3">
    <location>
        <begin position="333"/>
        <end position="356"/>
    </location>
</feature>
<feature type="topological domain" description="Periplasmic" evidence="4">
    <location>
        <begin position="357"/>
        <end position="365"/>
    </location>
</feature>
<feature type="transmembrane region" description="Helical" evidence="3">
    <location>
        <begin position="366"/>
        <end position="387"/>
    </location>
</feature>
<feature type="topological domain" description="Cytoplasmic" evidence="4">
    <location>
        <begin position="388"/>
        <end position="401"/>
    </location>
</feature>
<feature type="mutagenesis site" description="No change in activity." evidence="2">
    <original>S</original>
    <variation>A</variation>
    <location>
        <position position="65"/>
    </location>
</feature>
<feature type="mutagenesis site" description="Almost no change in activity." evidence="2">
    <original>S</original>
    <variation>C</variation>
    <location>
        <position position="65"/>
    </location>
</feature>
<feature type="mutagenesis site" description="Moderate resistance to tetracycline." evidence="2">
    <original>D</original>
    <variation>E</variation>
    <location>
        <position position="66"/>
    </location>
</feature>
<feature type="mutagenesis site" description="Unable to extrude tetracycline." evidence="2">
    <original>D</original>
    <variation>N</variation>
    <location>
        <position position="66"/>
    </location>
</feature>
<feature type="mutagenesis site" description="No H(+) translocation." evidence="1">
    <original>H</original>
    <variation>D</variation>
    <location>
        <position position="257"/>
    </location>
</feature>
<feature type="mutagenesis site" description="No H(+) translocation." evidence="1">
    <original>H</original>
    <variation>E</variation>
    <location>
        <position position="257"/>
    </location>
</feature>
<feature type="sequence conflict" description="In Ref. 2; CAA23880/AAB59094." evidence="3" ref="2">
    <original>G</original>
    <variation>E</variation>
    <location>
        <position position="281"/>
    </location>
</feature>
<feature type="sequence conflict" description="In Ref. 2; CAA23880/AAB59094." evidence="3" ref="2">
    <original>V</original>
    <variation>D</variation>
    <location>
        <position position="301"/>
    </location>
</feature>
<feature type="sequence conflict" description="In Ref. 2; CAA23880/AAB59094." evidence="3" ref="2">
    <original>Q</original>
    <variation>E</variation>
    <location>
        <position position="330"/>
    </location>
</feature>
<feature type="sequence conflict" description="In Ref. 2; CAA23880/AAB59094." evidence="3" ref="2">
    <original>A</original>
    <variation>T</variation>
    <location>
        <position position="354"/>
    </location>
</feature>
<organism>
    <name type="scientific">Escherichia coli</name>
    <dbReference type="NCBI Taxonomy" id="562"/>
    <lineage>
        <taxon>Bacteria</taxon>
        <taxon>Pseudomonadati</taxon>
        <taxon>Pseudomonadota</taxon>
        <taxon>Gammaproteobacteria</taxon>
        <taxon>Enterobacterales</taxon>
        <taxon>Enterobacteriaceae</taxon>
        <taxon>Escherichia</taxon>
    </lineage>
</organism>
<gene>
    <name type="primary">tetA</name>
</gene>
<protein>
    <recommendedName>
        <fullName>Tetracycline resistance protein, class B</fullName>
        <shortName>TetA(B)</shortName>
    </recommendedName>
    <alternativeName>
        <fullName>Metal-tetracycline/H(+) antiporter</fullName>
    </alternativeName>
</protein>
<proteinExistence type="evidence at protein level"/>
<dbReference type="EMBL" id="V00611">
    <property type="protein sequence ID" value="CAA23880.1"/>
    <property type="molecule type" value="Genomic_DNA"/>
</dbReference>
<dbReference type="EMBL" id="J01830">
    <property type="protein sequence ID" value="AAB59094.1"/>
    <property type="molecule type" value="Genomic_DNA"/>
</dbReference>
<dbReference type="PIR" id="A91505">
    <property type="entry name" value="YTECT0"/>
</dbReference>
<dbReference type="RefSeq" id="YP_001096450.1">
    <property type="nucleotide sequence ID" value="NC_009133.1"/>
</dbReference>
<dbReference type="RefSeq" id="YP_009060383.1">
    <property type="nucleotide sequence ID" value="NC_024960.1"/>
</dbReference>
<dbReference type="RefSeq" id="YP_009062970.1">
    <property type="nucleotide sequence ID" value="NC_025021.1"/>
</dbReference>
<dbReference type="SMR" id="P02980"/>
<dbReference type="DIP" id="DIP-16933N"/>
<dbReference type="ChEMBL" id="CHEMBL5821"/>
<dbReference type="DrugCentral" id="P02980"/>
<dbReference type="TCDB" id="2.A.1.2.68">
    <property type="family name" value="the major facilitator superfamily (mfs)"/>
</dbReference>
<dbReference type="OMA" id="LELMWYG"/>
<dbReference type="PRO" id="PR:P02980"/>
<dbReference type="GO" id="GO:0005886">
    <property type="term" value="C:plasma membrane"/>
    <property type="evidence" value="ECO:0007669"/>
    <property type="project" value="UniProtKB-SubCell"/>
</dbReference>
<dbReference type="GO" id="GO:0015297">
    <property type="term" value="F:antiporter activity"/>
    <property type="evidence" value="ECO:0007669"/>
    <property type="project" value="UniProtKB-KW"/>
</dbReference>
<dbReference type="GO" id="GO:0046677">
    <property type="term" value="P:response to antibiotic"/>
    <property type="evidence" value="ECO:0007669"/>
    <property type="project" value="UniProtKB-KW"/>
</dbReference>
<dbReference type="CDD" id="cd17388">
    <property type="entry name" value="MFS_TetA"/>
    <property type="match status" value="1"/>
</dbReference>
<dbReference type="Gene3D" id="1.20.1250.20">
    <property type="entry name" value="MFS general substrate transporter like domains"/>
    <property type="match status" value="1"/>
</dbReference>
<dbReference type="InterPro" id="IPR011701">
    <property type="entry name" value="MFS"/>
</dbReference>
<dbReference type="InterPro" id="IPR020846">
    <property type="entry name" value="MFS_dom"/>
</dbReference>
<dbReference type="InterPro" id="IPR036259">
    <property type="entry name" value="MFS_trans_sf"/>
</dbReference>
<dbReference type="InterPro" id="IPR005829">
    <property type="entry name" value="Sugar_transporter_CS"/>
</dbReference>
<dbReference type="InterPro" id="IPR001958">
    <property type="entry name" value="Tet-R_TetA/multi-R_MdtG-like"/>
</dbReference>
<dbReference type="NCBIfam" id="NF012174">
    <property type="entry name" value="tet_MFS_A_B_C_D"/>
    <property type="match status" value="1"/>
</dbReference>
<dbReference type="NCBIfam" id="NF012190">
    <property type="entry name" value="tet_MFS_B"/>
    <property type="match status" value="1"/>
</dbReference>
<dbReference type="PANTHER" id="PTHR23504:SF15">
    <property type="entry name" value="MAJOR FACILITATOR SUPERFAMILY (MFS) PROFILE DOMAIN-CONTAINING PROTEIN"/>
    <property type="match status" value="1"/>
</dbReference>
<dbReference type="PANTHER" id="PTHR23504">
    <property type="entry name" value="MAJOR FACILITATOR SUPERFAMILY DOMAIN-CONTAINING PROTEIN 10"/>
    <property type="match status" value="1"/>
</dbReference>
<dbReference type="Pfam" id="PF07690">
    <property type="entry name" value="MFS_1"/>
    <property type="match status" value="1"/>
</dbReference>
<dbReference type="PRINTS" id="PR01035">
    <property type="entry name" value="TCRTETA"/>
</dbReference>
<dbReference type="SUPFAM" id="SSF103473">
    <property type="entry name" value="MFS general substrate transporter"/>
    <property type="match status" value="1"/>
</dbReference>
<dbReference type="PROSITE" id="PS50850">
    <property type="entry name" value="MFS"/>
    <property type="match status" value="1"/>
</dbReference>
<dbReference type="PROSITE" id="PS00216">
    <property type="entry name" value="SUGAR_TRANSPORT_1"/>
    <property type="match status" value="1"/>
</dbReference>
<reference key="1">
    <citation type="journal article" date="1983" name="Gene">
        <title>Sequence homology between the tetracycline-resistance determinants of Tn10 and pBR322.</title>
        <authorList>
            <person name="Nguyen T.T."/>
            <person name="Postle K."/>
            <person name="Bertrand K.P."/>
        </authorList>
    </citation>
    <scope>NUCLEOTIDE SEQUENCE [GENOMIC DNA]</scope>
    <source>
        <transposon>Tn10</transposon>
    </source>
</reference>
<reference key="2">
    <citation type="journal article" date="1983" name="Nucleic Acids Res.">
        <title>Nucleotide sequence of the Tn10 encoded tetracycline resistance gene.</title>
        <authorList>
            <person name="Hillen W."/>
            <person name="Schollmeier K."/>
        </authorList>
    </citation>
    <scope>NUCLEOTIDE SEQUENCE [GENOMIC DNA]</scope>
    <source>
        <transposon>Tn10</transposon>
    </source>
</reference>
<reference key="3">
    <citation type="journal article" date="1991" name="J. Biol. Chem.">
        <title>Metal-tetracycline/H+ antiporter of Escherichia coli encoded by a transposon Tn10. Histidine 257 plays an essential role in H+ translocation.</title>
        <authorList>
            <person name="Yamaguchi A."/>
            <person name="Adachi K."/>
            <person name="Akasaka T."/>
            <person name="Ono N."/>
            <person name="Sawai T."/>
        </authorList>
    </citation>
    <scope>MUTAGENESIS OF HIS-257</scope>
    <source>
        <transposon>Tn10</transposon>
    </source>
</reference>
<reference key="4">
    <citation type="journal article" date="1990" name="J. Biol. Chem.">
        <title>Metal-tetracycline/H+ antiporter of Escherichia coli encoded by a transposon, Tn10. The role of the conserved dipeptide, Ser65-Asp66, in tetracycline transport.</title>
        <authorList>
            <person name="Yamaguchi A."/>
            <person name="Ono N."/>
            <person name="Akasaka T."/>
            <person name="Noumi T."/>
            <person name="Sawai T."/>
        </authorList>
    </citation>
    <scope>MUTAGENESIS OF LYS-65 AND PHE-66</scope>
    <source>
        <transposon>Tn10</transposon>
    </source>
</reference>
<reference key="5">
    <citation type="journal article" date="1997" name="J. Biol. Chem.">
        <title>Membrane topology of the transposon 10-encoded metal-tetracycline/H+ antiporter as studied by site-directed chemical labeling.</title>
        <authorList>
            <person name="Kimura T."/>
            <person name="Ohnuma M."/>
            <person name="Sawai T."/>
            <person name="Yamaguchi A."/>
        </authorList>
    </citation>
    <scope>TOPOLOGY</scope>
    <source>
        <transposon>Tn10</transposon>
    </source>
</reference>
<accession>P02980</accession>
<name>TCR2_ECOLX</name>